<proteinExistence type="inferred from homology"/>
<organism>
    <name type="scientific">Streptococcus pyogenes serotype M18 (strain MGAS8232)</name>
    <dbReference type="NCBI Taxonomy" id="186103"/>
    <lineage>
        <taxon>Bacteria</taxon>
        <taxon>Bacillati</taxon>
        <taxon>Bacillota</taxon>
        <taxon>Bacilli</taxon>
        <taxon>Lactobacillales</taxon>
        <taxon>Streptococcaceae</taxon>
        <taxon>Streptococcus</taxon>
    </lineage>
</organism>
<feature type="chain" id="PRO_0000178245" description="dITP/XTP pyrophosphatase">
    <location>
        <begin position="1"/>
        <end position="328"/>
    </location>
</feature>
<feature type="region of interest" description="Unknown">
    <location>
        <begin position="1"/>
        <end position="129"/>
    </location>
</feature>
<feature type="region of interest" description="NTP pyrophosphatase">
    <location>
        <begin position="130"/>
        <end position="324"/>
    </location>
</feature>
<feature type="active site" description="Proton acceptor" evidence="1">
    <location>
        <position position="196"/>
    </location>
</feature>
<feature type="binding site" evidence="1">
    <location>
        <begin position="134"/>
        <end position="139"/>
    </location>
    <ligand>
        <name>substrate</name>
    </ligand>
</feature>
<feature type="binding site" evidence="1">
    <location>
        <position position="196"/>
    </location>
    <ligand>
        <name>Mg(2+)</name>
        <dbReference type="ChEBI" id="CHEBI:18420"/>
    </ligand>
</feature>
<feature type="binding site" evidence="1">
    <location>
        <position position="197"/>
    </location>
    <ligand>
        <name>substrate</name>
    </ligand>
</feature>
<feature type="binding site" evidence="1">
    <location>
        <begin position="280"/>
        <end position="283"/>
    </location>
    <ligand>
        <name>substrate</name>
    </ligand>
</feature>
<feature type="binding site" evidence="1">
    <location>
        <position position="303"/>
    </location>
    <ligand>
        <name>substrate</name>
    </ligand>
</feature>
<feature type="binding site" evidence="1">
    <location>
        <begin position="308"/>
        <end position="309"/>
    </location>
    <ligand>
        <name>substrate</name>
    </ligand>
</feature>
<accession>Q8P2D2</accession>
<sequence>MSEKIYEYKDENNWFIGKMTGHNLISGWGVKHTTIKKIDDLLDGIAATLDWENPKGYDVSVVRYQSPLSLITFIIDMINQETQREIKVIPHAGTILLMENAKLLAVYLPEGGVSTATFFATSEQGFGDTILIATRNEGKTKEFRNLFGQLGYRVENLNDYPELPEVAETGTTFEENARLKAETISHLTGKMVLADDSGLKVDALGGLPGVWSARFSGPDATDAKNNAKLLHELAMVFEQKKRSAQFHTTLVVAAPNKDSLVVEAEWPGYIATQPKGENGFGYDPVFIVGETGRHAAELEADQKNQLSHRGQAVRKLMEVFPAWQAKQS</sequence>
<evidence type="ECO:0000255" key="1">
    <source>
        <dbReference type="HAMAP-Rule" id="MF_01405"/>
    </source>
</evidence>
<evidence type="ECO:0000305" key="2"/>
<name>IXTPA_STRP8</name>
<dbReference type="EC" id="3.6.1.66" evidence="1"/>
<dbReference type="EMBL" id="AE009949">
    <property type="protein sequence ID" value="AAL97155.1"/>
    <property type="molecule type" value="Genomic_DNA"/>
</dbReference>
<dbReference type="RefSeq" id="WP_011017406.1">
    <property type="nucleotide sequence ID" value="NC_003485.1"/>
</dbReference>
<dbReference type="SMR" id="Q8P2D2"/>
<dbReference type="KEGG" id="spm:spyM18_0412"/>
<dbReference type="HOGENOM" id="CLU_863088_0_0_9"/>
<dbReference type="GO" id="GO:0005829">
    <property type="term" value="C:cytosol"/>
    <property type="evidence" value="ECO:0007669"/>
    <property type="project" value="TreeGrafter"/>
</dbReference>
<dbReference type="GO" id="GO:0035870">
    <property type="term" value="F:dITP diphosphatase activity"/>
    <property type="evidence" value="ECO:0007669"/>
    <property type="project" value="RHEA"/>
</dbReference>
<dbReference type="GO" id="GO:0036220">
    <property type="term" value="F:ITP diphosphatase activity"/>
    <property type="evidence" value="ECO:0007669"/>
    <property type="project" value="UniProtKB-EC"/>
</dbReference>
<dbReference type="GO" id="GO:0046872">
    <property type="term" value="F:metal ion binding"/>
    <property type="evidence" value="ECO:0007669"/>
    <property type="project" value="UniProtKB-KW"/>
</dbReference>
<dbReference type="GO" id="GO:0000166">
    <property type="term" value="F:nucleotide binding"/>
    <property type="evidence" value="ECO:0007669"/>
    <property type="project" value="UniProtKB-KW"/>
</dbReference>
<dbReference type="GO" id="GO:0017111">
    <property type="term" value="F:ribonucleoside triphosphate phosphatase activity"/>
    <property type="evidence" value="ECO:0007669"/>
    <property type="project" value="InterPro"/>
</dbReference>
<dbReference type="GO" id="GO:0036222">
    <property type="term" value="F:XTP diphosphatase activity"/>
    <property type="evidence" value="ECO:0007669"/>
    <property type="project" value="RHEA"/>
</dbReference>
<dbReference type="GO" id="GO:0009117">
    <property type="term" value="P:nucleotide metabolic process"/>
    <property type="evidence" value="ECO:0007669"/>
    <property type="project" value="UniProtKB-KW"/>
</dbReference>
<dbReference type="GO" id="GO:0009146">
    <property type="term" value="P:purine nucleoside triphosphate catabolic process"/>
    <property type="evidence" value="ECO:0007669"/>
    <property type="project" value="UniProtKB-UniRule"/>
</dbReference>
<dbReference type="CDD" id="cd00515">
    <property type="entry name" value="HAM1"/>
    <property type="match status" value="1"/>
</dbReference>
<dbReference type="FunFam" id="3.90.950.10:FF:000001">
    <property type="entry name" value="dITP/XTP pyrophosphatase"/>
    <property type="match status" value="1"/>
</dbReference>
<dbReference type="Gene3D" id="3.90.950.10">
    <property type="match status" value="1"/>
</dbReference>
<dbReference type="HAMAP" id="MF_01405">
    <property type="entry name" value="Non_canon_purine_NTPase"/>
    <property type="match status" value="1"/>
</dbReference>
<dbReference type="InterPro" id="IPR020922">
    <property type="entry name" value="dITP/XTP_pyrophosphatase"/>
</dbReference>
<dbReference type="InterPro" id="IPR029001">
    <property type="entry name" value="ITPase-like_fam"/>
</dbReference>
<dbReference type="InterPro" id="IPR002637">
    <property type="entry name" value="RdgB/HAM1"/>
</dbReference>
<dbReference type="NCBIfam" id="NF002698">
    <property type="entry name" value="PRK02491.1"/>
    <property type="match status" value="1"/>
</dbReference>
<dbReference type="NCBIfam" id="NF011397">
    <property type="entry name" value="PRK14822.1"/>
    <property type="match status" value="1"/>
</dbReference>
<dbReference type="NCBIfam" id="TIGR00042">
    <property type="entry name" value="RdgB/HAM1 family non-canonical purine NTP pyrophosphatase"/>
    <property type="match status" value="1"/>
</dbReference>
<dbReference type="PANTHER" id="PTHR11067:SF9">
    <property type="entry name" value="INOSINE TRIPHOSPHATE PYROPHOSPHATASE"/>
    <property type="match status" value="1"/>
</dbReference>
<dbReference type="PANTHER" id="PTHR11067">
    <property type="entry name" value="INOSINE TRIPHOSPHATE PYROPHOSPHATASE/HAM1 PROTEIN"/>
    <property type="match status" value="1"/>
</dbReference>
<dbReference type="Pfam" id="PF01725">
    <property type="entry name" value="Ham1p_like"/>
    <property type="match status" value="1"/>
</dbReference>
<dbReference type="SUPFAM" id="SSF52972">
    <property type="entry name" value="ITPase-like"/>
    <property type="match status" value="1"/>
</dbReference>
<protein>
    <recommendedName>
        <fullName evidence="1">dITP/XTP pyrophosphatase</fullName>
        <ecNumber evidence="1">3.6.1.66</ecNumber>
    </recommendedName>
    <alternativeName>
        <fullName evidence="1">Non-canonical purine NTP pyrophosphatase</fullName>
    </alternativeName>
    <alternativeName>
        <fullName evidence="1">Non-standard purine NTP pyrophosphatase</fullName>
    </alternativeName>
    <alternativeName>
        <fullName evidence="1">Nucleoside-triphosphate diphosphatase</fullName>
    </alternativeName>
    <alternativeName>
        <fullName evidence="1">Nucleoside-triphosphate pyrophosphatase</fullName>
        <shortName evidence="1">NTPase</shortName>
    </alternativeName>
</protein>
<keyword id="KW-0378">Hydrolase</keyword>
<keyword id="KW-0460">Magnesium</keyword>
<keyword id="KW-0479">Metal-binding</keyword>
<keyword id="KW-0546">Nucleotide metabolism</keyword>
<keyword id="KW-0547">Nucleotide-binding</keyword>
<reference key="1">
    <citation type="journal article" date="2002" name="Proc. Natl. Acad. Sci. U.S.A.">
        <title>Genome sequence and comparative microarray analysis of serotype M18 group A Streptococcus strains associated with acute rheumatic fever outbreaks.</title>
        <authorList>
            <person name="Smoot J.C."/>
            <person name="Barbian K.D."/>
            <person name="Van Gompel J.J."/>
            <person name="Smoot L.M."/>
            <person name="Chaussee M.S."/>
            <person name="Sylva G.L."/>
            <person name="Sturdevant D.E."/>
            <person name="Ricklefs S.M."/>
            <person name="Porcella S.F."/>
            <person name="Parkins L.D."/>
            <person name="Beres S.B."/>
            <person name="Campbell D.S."/>
            <person name="Smith T.M."/>
            <person name="Zhang Q."/>
            <person name="Kapur V."/>
            <person name="Daly J.A."/>
            <person name="Veasy L.G."/>
            <person name="Musser J.M."/>
        </authorList>
    </citation>
    <scope>NUCLEOTIDE SEQUENCE [LARGE SCALE GENOMIC DNA]</scope>
    <source>
        <strain>MGAS8232</strain>
    </source>
</reference>
<comment type="function">
    <text evidence="1">Pyrophosphatase that catalyzes the hydrolysis of nucleoside triphosphates to their monophosphate derivatives, with a high preference for the non-canonical purine nucleotides XTP (xanthosine triphosphate), dITP (deoxyinosine triphosphate) and ITP. Seems to function as a house-cleaning enzyme that removes non-canonical purine nucleotides from the nucleotide pool, thus preventing their incorporation into DNA/RNA and avoiding chromosomal lesions.</text>
</comment>
<comment type="catalytic activity">
    <reaction evidence="1">
        <text>XTP + H2O = XMP + diphosphate + H(+)</text>
        <dbReference type="Rhea" id="RHEA:28610"/>
        <dbReference type="ChEBI" id="CHEBI:15377"/>
        <dbReference type="ChEBI" id="CHEBI:15378"/>
        <dbReference type="ChEBI" id="CHEBI:33019"/>
        <dbReference type="ChEBI" id="CHEBI:57464"/>
        <dbReference type="ChEBI" id="CHEBI:61314"/>
        <dbReference type="EC" id="3.6.1.66"/>
    </reaction>
</comment>
<comment type="catalytic activity">
    <reaction evidence="1">
        <text>dITP + H2O = dIMP + diphosphate + H(+)</text>
        <dbReference type="Rhea" id="RHEA:28342"/>
        <dbReference type="ChEBI" id="CHEBI:15377"/>
        <dbReference type="ChEBI" id="CHEBI:15378"/>
        <dbReference type="ChEBI" id="CHEBI:33019"/>
        <dbReference type="ChEBI" id="CHEBI:61194"/>
        <dbReference type="ChEBI" id="CHEBI:61382"/>
        <dbReference type="EC" id="3.6.1.66"/>
    </reaction>
</comment>
<comment type="catalytic activity">
    <reaction evidence="1">
        <text>ITP + H2O = IMP + diphosphate + H(+)</text>
        <dbReference type="Rhea" id="RHEA:29399"/>
        <dbReference type="ChEBI" id="CHEBI:15377"/>
        <dbReference type="ChEBI" id="CHEBI:15378"/>
        <dbReference type="ChEBI" id="CHEBI:33019"/>
        <dbReference type="ChEBI" id="CHEBI:58053"/>
        <dbReference type="ChEBI" id="CHEBI:61402"/>
        <dbReference type="EC" id="3.6.1.66"/>
    </reaction>
</comment>
<comment type="cofactor">
    <cofactor evidence="1">
        <name>Mg(2+)</name>
        <dbReference type="ChEBI" id="CHEBI:18420"/>
    </cofactor>
    <text evidence="1">Binds 1 Mg(2+) ion per subunit.</text>
</comment>
<comment type="subunit">
    <text evidence="1">Homodimer.</text>
</comment>
<comment type="similarity">
    <text evidence="1 2">Belongs to the HAM1 NTPase family.</text>
</comment>
<gene>
    <name type="ordered locus">spyM18_0412</name>
</gene>